<accession>P9WKF0</accession>
<accession>L0T8F2</accession>
<accession>P65211</accession>
<accession>P96369</accession>
<proteinExistence type="inferred from homology"/>
<gene>
    <name evidence="1" type="primary">kdpC</name>
    <name type="ordered locus">MT1060</name>
</gene>
<reference key="1">
    <citation type="journal article" date="2002" name="J. Bacteriol.">
        <title>Whole-genome comparison of Mycobacterium tuberculosis clinical and laboratory strains.</title>
        <authorList>
            <person name="Fleischmann R.D."/>
            <person name="Alland D."/>
            <person name="Eisen J.A."/>
            <person name="Carpenter L."/>
            <person name="White O."/>
            <person name="Peterson J.D."/>
            <person name="DeBoy R.T."/>
            <person name="Dodson R.J."/>
            <person name="Gwinn M.L."/>
            <person name="Haft D.H."/>
            <person name="Hickey E.K."/>
            <person name="Kolonay J.F."/>
            <person name="Nelson W.C."/>
            <person name="Umayam L.A."/>
            <person name="Ermolaeva M.D."/>
            <person name="Salzberg S.L."/>
            <person name="Delcher A."/>
            <person name="Utterback T.R."/>
            <person name="Weidman J.F."/>
            <person name="Khouri H.M."/>
            <person name="Gill J."/>
            <person name="Mikula A."/>
            <person name="Bishai W."/>
            <person name="Jacobs W.R. Jr."/>
            <person name="Venter J.C."/>
            <person name="Fraser C.M."/>
        </authorList>
    </citation>
    <scope>NUCLEOTIDE SEQUENCE [LARGE SCALE GENOMIC DNA]</scope>
    <source>
        <strain>CDC 1551 / Oshkosh</strain>
    </source>
</reference>
<name>KDPC_MYCTO</name>
<keyword id="KW-0067">ATP-binding</keyword>
<keyword id="KW-1003">Cell membrane</keyword>
<keyword id="KW-0406">Ion transport</keyword>
<keyword id="KW-0472">Membrane</keyword>
<keyword id="KW-0547">Nucleotide-binding</keyword>
<keyword id="KW-0630">Potassium</keyword>
<keyword id="KW-0633">Potassium transport</keyword>
<keyword id="KW-1185">Reference proteome</keyword>
<keyword id="KW-0812">Transmembrane</keyword>
<keyword id="KW-1133">Transmembrane helix</keyword>
<keyword id="KW-0813">Transport</keyword>
<protein>
    <recommendedName>
        <fullName evidence="1">Potassium-transporting ATPase KdpC subunit</fullName>
    </recommendedName>
    <alternativeName>
        <fullName evidence="1">ATP phosphohydrolase [potassium-transporting] C chain</fullName>
    </alternativeName>
    <alternativeName>
        <fullName evidence="1">Potassium-binding and translocating subunit C</fullName>
    </alternativeName>
    <alternativeName>
        <fullName evidence="1">Potassium-translocating ATPase C chain</fullName>
    </alternativeName>
</protein>
<organism>
    <name type="scientific">Mycobacterium tuberculosis (strain CDC 1551 / Oshkosh)</name>
    <dbReference type="NCBI Taxonomy" id="83331"/>
    <lineage>
        <taxon>Bacteria</taxon>
        <taxon>Bacillati</taxon>
        <taxon>Actinomycetota</taxon>
        <taxon>Actinomycetes</taxon>
        <taxon>Mycobacteriales</taxon>
        <taxon>Mycobacteriaceae</taxon>
        <taxon>Mycobacterium</taxon>
        <taxon>Mycobacterium tuberculosis complex</taxon>
    </lineage>
</organism>
<comment type="function">
    <text evidence="1">Part of the high-affinity ATP-driven potassium transport (or Kdp) system, which catalyzes the hydrolysis of ATP coupled with the electrogenic transport of potassium into the cytoplasm. This subunit acts as a catalytic chaperone that increases the ATP-binding affinity of the ATP-hydrolyzing subunit KdpB by the formation of a transient KdpB/KdpC/ATP ternary complex.</text>
</comment>
<comment type="subunit">
    <text evidence="1">The system is composed of three essential subunits: KdpA, KdpB and KdpC.</text>
</comment>
<comment type="subcellular location">
    <subcellularLocation>
        <location evidence="1">Cell membrane</location>
        <topology evidence="1">Single-pass membrane protein</topology>
    </subcellularLocation>
</comment>
<comment type="similarity">
    <text evidence="1">Belongs to the KdpC family.</text>
</comment>
<evidence type="ECO:0000255" key="1">
    <source>
        <dbReference type="HAMAP-Rule" id="MF_00276"/>
    </source>
</evidence>
<sequence>MRRQLLPALTMLLVFTVITGIVYPLAVTGVGQLFFGDQANGALLERDGQVIGSAHIGQQFTAAKYFHPRPSSAGDGYDAAASSGSNLGPTNEKLLAAVAERVTAYRKENNLPADTLVPVDAVTGSGSGLDPAISVVNAKLQAPRVAQARNISIRQVERLIEDHTDARGLGFLGERAVNVLRLNLALDRL</sequence>
<dbReference type="EMBL" id="AE000516">
    <property type="protein sequence ID" value="AAK45312.1"/>
    <property type="molecule type" value="Genomic_DNA"/>
</dbReference>
<dbReference type="PIR" id="B70624">
    <property type="entry name" value="B70624"/>
</dbReference>
<dbReference type="RefSeq" id="WP_003405322.1">
    <property type="nucleotide sequence ID" value="NZ_KK341227.1"/>
</dbReference>
<dbReference type="SMR" id="P9WKF0"/>
<dbReference type="KEGG" id="mtc:MT1060"/>
<dbReference type="PATRIC" id="fig|83331.31.peg.1139"/>
<dbReference type="HOGENOM" id="CLU_077094_2_0_11"/>
<dbReference type="Proteomes" id="UP000001020">
    <property type="component" value="Chromosome"/>
</dbReference>
<dbReference type="GO" id="GO:0005886">
    <property type="term" value="C:plasma membrane"/>
    <property type="evidence" value="ECO:0007669"/>
    <property type="project" value="UniProtKB-SubCell"/>
</dbReference>
<dbReference type="GO" id="GO:0005524">
    <property type="term" value="F:ATP binding"/>
    <property type="evidence" value="ECO:0007669"/>
    <property type="project" value="UniProtKB-UniRule"/>
</dbReference>
<dbReference type="GO" id="GO:0008556">
    <property type="term" value="F:P-type potassium transmembrane transporter activity"/>
    <property type="evidence" value="ECO:0007669"/>
    <property type="project" value="InterPro"/>
</dbReference>
<dbReference type="HAMAP" id="MF_00276">
    <property type="entry name" value="KdpC"/>
    <property type="match status" value="1"/>
</dbReference>
<dbReference type="InterPro" id="IPR003820">
    <property type="entry name" value="KdpC"/>
</dbReference>
<dbReference type="NCBIfam" id="TIGR00681">
    <property type="entry name" value="kdpC"/>
    <property type="match status" value="1"/>
</dbReference>
<dbReference type="NCBIfam" id="NF001454">
    <property type="entry name" value="PRK00315.1"/>
    <property type="match status" value="1"/>
</dbReference>
<dbReference type="NCBIfam" id="NF010605">
    <property type="entry name" value="PRK14001.1"/>
    <property type="match status" value="1"/>
</dbReference>
<dbReference type="PANTHER" id="PTHR30042">
    <property type="entry name" value="POTASSIUM-TRANSPORTING ATPASE C CHAIN"/>
    <property type="match status" value="1"/>
</dbReference>
<dbReference type="PANTHER" id="PTHR30042:SF2">
    <property type="entry name" value="POTASSIUM-TRANSPORTING ATPASE KDPC SUBUNIT"/>
    <property type="match status" value="1"/>
</dbReference>
<dbReference type="Pfam" id="PF02669">
    <property type="entry name" value="KdpC"/>
    <property type="match status" value="1"/>
</dbReference>
<dbReference type="PIRSF" id="PIRSF001296">
    <property type="entry name" value="K_ATPase_KdpC"/>
    <property type="match status" value="1"/>
</dbReference>
<feature type="chain" id="PRO_0000427665" description="Potassium-transporting ATPase KdpC subunit">
    <location>
        <begin position="1"/>
        <end position="189"/>
    </location>
</feature>
<feature type="transmembrane region" description="Helical" evidence="1">
    <location>
        <begin position="5"/>
        <end position="25"/>
    </location>
</feature>